<comment type="function">
    <text evidence="1">Catalyzes the isomerization between 2-isopropylmalate and 3-isopropylmalate, via the formation of 2-isopropylmaleate.</text>
</comment>
<comment type="catalytic activity">
    <reaction evidence="1">
        <text>(2R,3S)-3-isopropylmalate = (2S)-2-isopropylmalate</text>
        <dbReference type="Rhea" id="RHEA:32287"/>
        <dbReference type="ChEBI" id="CHEBI:1178"/>
        <dbReference type="ChEBI" id="CHEBI:35121"/>
        <dbReference type="EC" id="4.2.1.33"/>
    </reaction>
</comment>
<comment type="cofactor">
    <cofactor evidence="1">
        <name>[4Fe-4S] cluster</name>
        <dbReference type="ChEBI" id="CHEBI:49883"/>
    </cofactor>
    <text evidence="1">Binds 1 [4Fe-4S] cluster per subunit.</text>
</comment>
<comment type="pathway">
    <text evidence="1">Amino-acid biosynthesis; L-leucine biosynthesis; L-leucine from 3-methyl-2-oxobutanoate: step 2/4.</text>
</comment>
<comment type="subunit">
    <text evidence="1">Heterodimer of LeuC and LeuD.</text>
</comment>
<comment type="similarity">
    <text evidence="1">Belongs to the aconitase/IPM isomerase family. LeuC type 1 subfamily.</text>
</comment>
<accession>Q9JZI5</accession>
<organism>
    <name type="scientific">Neisseria meningitidis serogroup B (strain ATCC BAA-335 / MC58)</name>
    <dbReference type="NCBI Taxonomy" id="122586"/>
    <lineage>
        <taxon>Bacteria</taxon>
        <taxon>Pseudomonadati</taxon>
        <taxon>Pseudomonadota</taxon>
        <taxon>Betaproteobacteria</taxon>
        <taxon>Neisseriales</taxon>
        <taxon>Neisseriaceae</taxon>
        <taxon>Neisseria</taxon>
    </lineage>
</organism>
<evidence type="ECO:0000255" key="1">
    <source>
        <dbReference type="HAMAP-Rule" id="MF_01026"/>
    </source>
</evidence>
<dbReference type="EC" id="4.2.1.33" evidence="1"/>
<dbReference type="EMBL" id="AE002098">
    <property type="protein sequence ID" value="AAF41435.1"/>
    <property type="molecule type" value="Genomic_DNA"/>
</dbReference>
<dbReference type="PIR" id="G81128">
    <property type="entry name" value="G81128"/>
</dbReference>
<dbReference type="RefSeq" id="NP_274070.1">
    <property type="nucleotide sequence ID" value="NC_003112.2"/>
</dbReference>
<dbReference type="RefSeq" id="WP_002219221.1">
    <property type="nucleotide sequence ID" value="NC_003112.2"/>
</dbReference>
<dbReference type="SMR" id="Q9JZI5"/>
<dbReference type="FunCoup" id="Q9JZI5">
    <property type="interactions" value="474"/>
</dbReference>
<dbReference type="STRING" id="122586.NMB1036"/>
<dbReference type="PaxDb" id="122586-NMB1036"/>
<dbReference type="KEGG" id="nme:NMB1036"/>
<dbReference type="PATRIC" id="fig|122586.8.peg.1320"/>
<dbReference type="HOGENOM" id="CLU_006714_3_4_4"/>
<dbReference type="InParanoid" id="Q9JZI5"/>
<dbReference type="OrthoDB" id="9802769at2"/>
<dbReference type="UniPathway" id="UPA00048">
    <property type="reaction ID" value="UER00071"/>
</dbReference>
<dbReference type="Proteomes" id="UP000000425">
    <property type="component" value="Chromosome"/>
</dbReference>
<dbReference type="GO" id="GO:0003861">
    <property type="term" value="F:3-isopropylmalate dehydratase activity"/>
    <property type="evidence" value="ECO:0007669"/>
    <property type="project" value="UniProtKB-UniRule"/>
</dbReference>
<dbReference type="GO" id="GO:0051539">
    <property type="term" value="F:4 iron, 4 sulfur cluster binding"/>
    <property type="evidence" value="ECO:0007669"/>
    <property type="project" value="UniProtKB-KW"/>
</dbReference>
<dbReference type="GO" id="GO:0046872">
    <property type="term" value="F:metal ion binding"/>
    <property type="evidence" value="ECO:0007669"/>
    <property type="project" value="UniProtKB-KW"/>
</dbReference>
<dbReference type="GO" id="GO:0009098">
    <property type="term" value="P:L-leucine biosynthetic process"/>
    <property type="evidence" value="ECO:0007669"/>
    <property type="project" value="UniProtKB-UniRule"/>
</dbReference>
<dbReference type="CDD" id="cd01583">
    <property type="entry name" value="IPMI"/>
    <property type="match status" value="1"/>
</dbReference>
<dbReference type="FunFam" id="3.30.499.10:FF:000007">
    <property type="entry name" value="3-isopropylmalate dehydratase large subunit"/>
    <property type="match status" value="1"/>
</dbReference>
<dbReference type="Gene3D" id="3.30.499.10">
    <property type="entry name" value="Aconitase, domain 3"/>
    <property type="match status" value="2"/>
</dbReference>
<dbReference type="HAMAP" id="MF_01026">
    <property type="entry name" value="LeuC_type1"/>
    <property type="match status" value="1"/>
</dbReference>
<dbReference type="InterPro" id="IPR004430">
    <property type="entry name" value="3-IsopropMal_deHydase_lsu"/>
</dbReference>
<dbReference type="InterPro" id="IPR015931">
    <property type="entry name" value="Acnase/IPM_dHydase_lsu_aba_1/3"/>
</dbReference>
<dbReference type="InterPro" id="IPR001030">
    <property type="entry name" value="Acoase/IPM_deHydtase_lsu_aba"/>
</dbReference>
<dbReference type="InterPro" id="IPR018136">
    <property type="entry name" value="Aconitase_4Fe-4S_BS"/>
</dbReference>
<dbReference type="InterPro" id="IPR036008">
    <property type="entry name" value="Aconitase_4Fe-4S_dom"/>
</dbReference>
<dbReference type="InterPro" id="IPR050067">
    <property type="entry name" value="IPM_dehydratase_rel_enz"/>
</dbReference>
<dbReference type="InterPro" id="IPR033941">
    <property type="entry name" value="IPMI_cat"/>
</dbReference>
<dbReference type="NCBIfam" id="TIGR00170">
    <property type="entry name" value="leuC"/>
    <property type="match status" value="1"/>
</dbReference>
<dbReference type="NCBIfam" id="NF004016">
    <property type="entry name" value="PRK05478.1"/>
    <property type="match status" value="1"/>
</dbReference>
<dbReference type="NCBIfam" id="NF009116">
    <property type="entry name" value="PRK12466.1"/>
    <property type="match status" value="1"/>
</dbReference>
<dbReference type="PANTHER" id="PTHR43822:SF9">
    <property type="entry name" value="3-ISOPROPYLMALATE DEHYDRATASE"/>
    <property type="match status" value="1"/>
</dbReference>
<dbReference type="PANTHER" id="PTHR43822">
    <property type="entry name" value="HOMOACONITASE, MITOCHONDRIAL-RELATED"/>
    <property type="match status" value="1"/>
</dbReference>
<dbReference type="Pfam" id="PF00330">
    <property type="entry name" value="Aconitase"/>
    <property type="match status" value="1"/>
</dbReference>
<dbReference type="PRINTS" id="PR00415">
    <property type="entry name" value="ACONITASE"/>
</dbReference>
<dbReference type="SUPFAM" id="SSF53732">
    <property type="entry name" value="Aconitase iron-sulfur domain"/>
    <property type="match status" value="1"/>
</dbReference>
<dbReference type="PROSITE" id="PS00450">
    <property type="entry name" value="ACONITASE_1"/>
    <property type="match status" value="1"/>
</dbReference>
<dbReference type="PROSITE" id="PS01244">
    <property type="entry name" value="ACONITASE_2"/>
    <property type="match status" value="1"/>
</dbReference>
<proteinExistence type="inferred from homology"/>
<reference key="1">
    <citation type="journal article" date="2000" name="Science">
        <title>Complete genome sequence of Neisseria meningitidis serogroup B strain MC58.</title>
        <authorList>
            <person name="Tettelin H."/>
            <person name="Saunders N.J."/>
            <person name="Heidelberg J.F."/>
            <person name="Jeffries A.C."/>
            <person name="Nelson K.E."/>
            <person name="Eisen J.A."/>
            <person name="Ketchum K.A."/>
            <person name="Hood D.W."/>
            <person name="Peden J.F."/>
            <person name="Dodson R.J."/>
            <person name="Nelson W.C."/>
            <person name="Gwinn M.L."/>
            <person name="DeBoy R.T."/>
            <person name="Peterson J.D."/>
            <person name="Hickey E.K."/>
            <person name="Haft D.H."/>
            <person name="Salzberg S.L."/>
            <person name="White O."/>
            <person name="Fleischmann R.D."/>
            <person name="Dougherty B.A."/>
            <person name="Mason T.M."/>
            <person name="Ciecko A."/>
            <person name="Parksey D.S."/>
            <person name="Blair E."/>
            <person name="Cittone H."/>
            <person name="Clark E.B."/>
            <person name="Cotton M.D."/>
            <person name="Utterback T.R."/>
            <person name="Khouri H.M."/>
            <person name="Qin H."/>
            <person name="Vamathevan J.J."/>
            <person name="Gill J."/>
            <person name="Scarlato V."/>
            <person name="Masignani V."/>
            <person name="Pizza M."/>
            <person name="Grandi G."/>
            <person name="Sun L."/>
            <person name="Smith H.O."/>
            <person name="Fraser C.M."/>
            <person name="Moxon E.R."/>
            <person name="Rappuoli R."/>
            <person name="Venter J.C."/>
        </authorList>
    </citation>
    <scope>NUCLEOTIDE SEQUENCE [LARGE SCALE GENOMIC DNA]</scope>
    <source>
        <strain>ATCC BAA-335 / MC58</strain>
    </source>
</reference>
<gene>
    <name evidence="1" type="primary">leuC</name>
    <name type="ordered locus">NMB1036</name>
</gene>
<feature type="chain" id="PRO_0000076769" description="3-isopropylmalate dehydratase large subunit">
    <location>
        <begin position="1"/>
        <end position="469"/>
    </location>
</feature>
<feature type="binding site" evidence="1">
    <location>
        <position position="349"/>
    </location>
    <ligand>
        <name>[4Fe-4S] cluster</name>
        <dbReference type="ChEBI" id="CHEBI:49883"/>
    </ligand>
</feature>
<feature type="binding site" evidence="1">
    <location>
        <position position="410"/>
    </location>
    <ligand>
        <name>[4Fe-4S] cluster</name>
        <dbReference type="ChEBI" id="CHEBI:49883"/>
    </ligand>
</feature>
<feature type="binding site" evidence="1">
    <location>
        <position position="413"/>
    </location>
    <ligand>
        <name>[4Fe-4S] cluster</name>
        <dbReference type="ChEBI" id="CHEBI:49883"/>
    </ligand>
</feature>
<name>LEUC_NEIMB</name>
<keyword id="KW-0004">4Fe-4S</keyword>
<keyword id="KW-0028">Amino-acid biosynthesis</keyword>
<keyword id="KW-0100">Branched-chain amino acid biosynthesis</keyword>
<keyword id="KW-0408">Iron</keyword>
<keyword id="KW-0411">Iron-sulfur</keyword>
<keyword id="KW-0432">Leucine biosynthesis</keyword>
<keyword id="KW-0456">Lyase</keyword>
<keyword id="KW-0479">Metal-binding</keyword>
<keyword id="KW-1185">Reference proteome</keyword>
<sequence>MTAQTLYDKLWNSHVVREEEDGTVLLYIDRHLVHEVTSPQAFEGLKMAGRKLWRIDSVVSTADHNTPTGDWDKGIQDPISKLQVDTLDKNIKEFGALAYFPFMDKGQGIVHVMGPEQGATLPGMTVVCGDSHTSTHGAFGALAHGIGTSEVEHTMATQCITAKKSKSMLISVDGKLKAGVTAKDVALYIIGQIGTAGGTGYAIEFGGEAIRSLSMESRMTLCNMAIEAGARSGMVAVDQTTIDYVKDKPFAPEGEAWDKAVEYWRTLVSDEGAVFDKEYRFNAEDIEPQVTWGTSPEMVLDISSKVPNPAEETDPVKRSGMERALEYMGLEAGTPLNEIPVDIVFIGSCTNSRIEDLREAAAIAKDRKKAANVQRVLIVPGSGLVKEQAEKEGLDKIFIEAGFEWREPGCSMCLAMNADRLTPGQRCASTSNRNFEGRQGNGGRTHLVSPAMAAAAAVTGRFTDIRMMA</sequence>
<protein>
    <recommendedName>
        <fullName evidence="1">3-isopropylmalate dehydratase large subunit</fullName>
        <ecNumber evidence="1">4.2.1.33</ecNumber>
    </recommendedName>
    <alternativeName>
        <fullName evidence="1">Alpha-IPM isomerase</fullName>
        <shortName evidence="1">IPMI</shortName>
    </alternativeName>
    <alternativeName>
        <fullName evidence="1">Isopropylmalate isomerase</fullName>
    </alternativeName>
</protein>